<gene>
    <name evidence="2" type="primary">ddl</name>
    <name type="ordered locus">PC1_3590</name>
</gene>
<organism>
    <name type="scientific">Pectobacterium carotovorum subsp. carotovorum (strain PC1)</name>
    <dbReference type="NCBI Taxonomy" id="561230"/>
    <lineage>
        <taxon>Bacteria</taxon>
        <taxon>Pseudomonadati</taxon>
        <taxon>Pseudomonadota</taxon>
        <taxon>Gammaproteobacteria</taxon>
        <taxon>Enterobacterales</taxon>
        <taxon>Pectobacteriaceae</taxon>
        <taxon>Pectobacterium</taxon>
    </lineage>
</organism>
<feature type="chain" id="PRO_1000202202" description="D-alanine--D-alanine ligase">
    <location>
        <begin position="1"/>
        <end position="306"/>
    </location>
</feature>
<feature type="domain" description="ATP-grasp" evidence="2">
    <location>
        <begin position="101"/>
        <end position="303"/>
    </location>
</feature>
<feature type="binding site" evidence="2">
    <location>
        <begin position="134"/>
        <end position="189"/>
    </location>
    <ligand>
        <name>ATP</name>
        <dbReference type="ChEBI" id="CHEBI:30616"/>
    </ligand>
</feature>
<feature type="binding site" evidence="2">
    <location>
        <position position="257"/>
    </location>
    <ligand>
        <name>Mg(2+)</name>
        <dbReference type="ChEBI" id="CHEBI:18420"/>
        <label>1</label>
    </ligand>
</feature>
<feature type="binding site" evidence="2">
    <location>
        <position position="270"/>
    </location>
    <ligand>
        <name>Mg(2+)</name>
        <dbReference type="ChEBI" id="CHEBI:18420"/>
        <label>1</label>
    </ligand>
</feature>
<feature type="binding site" evidence="2">
    <location>
        <position position="270"/>
    </location>
    <ligand>
        <name>Mg(2+)</name>
        <dbReference type="ChEBI" id="CHEBI:18420"/>
        <label>2</label>
    </ligand>
</feature>
<feature type="binding site" evidence="2">
    <location>
        <position position="272"/>
    </location>
    <ligand>
        <name>Mg(2+)</name>
        <dbReference type="ChEBI" id="CHEBI:18420"/>
        <label>2</label>
    </ligand>
</feature>
<comment type="function">
    <text evidence="2">Cell wall formation.</text>
</comment>
<comment type="catalytic activity">
    <reaction evidence="2">
        <text>2 D-alanine + ATP = D-alanyl-D-alanine + ADP + phosphate + H(+)</text>
        <dbReference type="Rhea" id="RHEA:11224"/>
        <dbReference type="ChEBI" id="CHEBI:15378"/>
        <dbReference type="ChEBI" id="CHEBI:30616"/>
        <dbReference type="ChEBI" id="CHEBI:43474"/>
        <dbReference type="ChEBI" id="CHEBI:57416"/>
        <dbReference type="ChEBI" id="CHEBI:57822"/>
        <dbReference type="ChEBI" id="CHEBI:456216"/>
        <dbReference type="EC" id="6.3.2.4"/>
    </reaction>
</comment>
<comment type="cofactor">
    <cofactor evidence="1">
        <name>Mg(2+)</name>
        <dbReference type="ChEBI" id="CHEBI:18420"/>
    </cofactor>
    <cofactor evidence="1">
        <name>Mn(2+)</name>
        <dbReference type="ChEBI" id="CHEBI:29035"/>
    </cofactor>
    <text evidence="1">Binds 2 magnesium or manganese ions per subunit.</text>
</comment>
<comment type="pathway">
    <text evidence="2">Cell wall biogenesis; peptidoglycan biosynthesis.</text>
</comment>
<comment type="subcellular location">
    <subcellularLocation>
        <location evidence="2">Cytoplasm</location>
    </subcellularLocation>
</comment>
<comment type="similarity">
    <text evidence="2">Belongs to the D-alanine--D-alanine ligase family.</text>
</comment>
<dbReference type="EC" id="6.3.2.4" evidence="2"/>
<dbReference type="EMBL" id="CP001657">
    <property type="protein sequence ID" value="ACT14605.1"/>
    <property type="molecule type" value="Genomic_DNA"/>
</dbReference>
<dbReference type="RefSeq" id="WP_015841723.1">
    <property type="nucleotide sequence ID" value="NC_012917.1"/>
</dbReference>
<dbReference type="SMR" id="C6DEU1"/>
<dbReference type="STRING" id="561230.PC1_3590"/>
<dbReference type="KEGG" id="pct:PC1_3590"/>
<dbReference type="eggNOG" id="COG1181">
    <property type="taxonomic scope" value="Bacteria"/>
</dbReference>
<dbReference type="HOGENOM" id="CLU_039268_1_2_6"/>
<dbReference type="OrthoDB" id="9813261at2"/>
<dbReference type="UniPathway" id="UPA00219"/>
<dbReference type="Proteomes" id="UP000002736">
    <property type="component" value="Chromosome"/>
</dbReference>
<dbReference type="GO" id="GO:0005829">
    <property type="term" value="C:cytosol"/>
    <property type="evidence" value="ECO:0007669"/>
    <property type="project" value="TreeGrafter"/>
</dbReference>
<dbReference type="GO" id="GO:0005524">
    <property type="term" value="F:ATP binding"/>
    <property type="evidence" value="ECO:0007669"/>
    <property type="project" value="UniProtKB-KW"/>
</dbReference>
<dbReference type="GO" id="GO:0008716">
    <property type="term" value="F:D-alanine-D-alanine ligase activity"/>
    <property type="evidence" value="ECO:0007669"/>
    <property type="project" value="UniProtKB-UniRule"/>
</dbReference>
<dbReference type="GO" id="GO:0046872">
    <property type="term" value="F:metal ion binding"/>
    <property type="evidence" value="ECO:0007669"/>
    <property type="project" value="UniProtKB-KW"/>
</dbReference>
<dbReference type="GO" id="GO:0071555">
    <property type="term" value="P:cell wall organization"/>
    <property type="evidence" value="ECO:0007669"/>
    <property type="project" value="UniProtKB-KW"/>
</dbReference>
<dbReference type="GO" id="GO:0009252">
    <property type="term" value="P:peptidoglycan biosynthetic process"/>
    <property type="evidence" value="ECO:0007669"/>
    <property type="project" value="UniProtKB-UniRule"/>
</dbReference>
<dbReference type="GO" id="GO:0008360">
    <property type="term" value="P:regulation of cell shape"/>
    <property type="evidence" value="ECO:0007669"/>
    <property type="project" value="UniProtKB-KW"/>
</dbReference>
<dbReference type="FunFam" id="3.30.1490.20:FF:000007">
    <property type="entry name" value="D-alanine--D-alanine ligase"/>
    <property type="match status" value="1"/>
</dbReference>
<dbReference type="FunFam" id="3.30.470.20:FF:000008">
    <property type="entry name" value="D-alanine--D-alanine ligase"/>
    <property type="match status" value="1"/>
</dbReference>
<dbReference type="FunFam" id="3.40.50.20:FF:000013">
    <property type="entry name" value="D-alanine--D-alanine ligase"/>
    <property type="match status" value="1"/>
</dbReference>
<dbReference type="Gene3D" id="3.40.50.20">
    <property type="match status" value="1"/>
</dbReference>
<dbReference type="Gene3D" id="3.30.1490.20">
    <property type="entry name" value="ATP-grasp fold, A domain"/>
    <property type="match status" value="1"/>
</dbReference>
<dbReference type="Gene3D" id="3.30.470.20">
    <property type="entry name" value="ATP-grasp fold, B domain"/>
    <property type="match status" value="1"/>
</dbReference>
<dbReference type="HAMAP" id="MF_00047">
    <property type="entry name" value="Dala_Dala_lig"/>
    <property type="match status" value="1"/>
</dbReference>
<dbReference type="InterPro" id="IPR011761">
    <property type="entry name" value="ATP-grasp"/>
</dbReference>
<dbReference type="InterPro" id="IPR013815">
    <property type="entry name" value="ATP_grasp_subdomain_1"/>
</dbReference>
<dbReference type="InterPro" id="IPR000291">
    <property type="entry name" value="D-Ala_lig_Van_CS"/>
</dbReference>
<dbReference type="InterPro" id="IPR005905">
    <property type="entry name" value="D_ala_D_ala"/>
</dbReference>
<dbReference type="InterPro" id="IPR011095">
    <property type="entry name" value="Dala_Dala_lig_C"/>
</dbReference>
<dbReference type="InterPro" id="IPR011127">
    <property type="entry name" value="Dala_Dala_lig_N"/>
</dbReference>
<dbReference type="InterPro" id="IPR016185">
    <property type="entry name" value="PreATP-grasp_dom_sf"/>
</dbReference>
<dbReference type="NCBIfam" id="TIGR01205">
    <property type="entry name" value="D_ala_D_alaTIGR"/>
    <property type="match status" value="1"/>
</dbReference>
<dbReference type="NCBIfam" id="NF002378">
    <property type="entry name" value="PRK01372.1"/>
    <property type="match status" value="1"/>
</dbReference>
<dbReference type="PANTHER" id="PTHR23132">
    <property type="entry name" value="D-ALANINE--D-ALANINE LIGASE"/>
    <property type="match status" value="1"/>
</dbReference>
<dbReference type="PANTHER" id="PTHR23132:SF23">
    <property type="entry name" value="D-ALANINE--D-ALANINE LIGASE B"/>
    <property type="match status" value="1"/>
</dbReference>
<dbReference type="Pfam" id="PF07478">
    <property type="entry name" value="Dala_Dala_lig_C"/>
    <property type="match status" value="1"/>
</dbReference>
<dbReference type="Pfam" id="PF01820">
    <property type="entry name" value="Dala_Dala_lig_N"/>
    <property type="match status" value="1"/>
</dbReference>
<dbReference type="PIRSF" id="PIRSF039102">
    <property type="entry name" value="Ddl/VanB"/>
    <property type="match status" value="1"/>
</dbReference>
<dbReference type="SUPFAM" id="SSF56059">
    <property type="entry name" value="Glutathione synthetase ATP-binding domain-like"/>
    <property type="match status" value="1"/>
</dbReference>
<dbReference type="SUPFAM" id="SSF52440">
    <property type="entry name" value="PreATP-grasp domain"/>
    <property type="match status" value="1"/>
</dbReference>
<dbReference type="PROSITE" id="PS50975">
    <property type="entry name" value="ATP_GRASP"/>
    <property type="match status" value="1"/>
</dbReference>
<dbReference type="PROSITE" id="PS00843">
    <property type="entry name" value="DALA_DALA_LIGASE_1"/>
    <property type="match status" value="1"/>
</dbReference>
<dbReference type="PROSITE" id="PS00844">
    <property type="entry name" value="DALA_DALA_LIGASE_2"/>
    <property type="match status" value="1"/>
</dbReference>
<proteinExistence type="inferred from homology"/>
<sequence length="306" mass="32836">MTEKVAVLLGGTSAEREVSLLSGQAVLAGLKEAGINAHAVDTRDVSVTTLKEEGFTKIFIALHGRGGEDGTLQGVLEFLGLPYTGSGVMASALTMDKLRTKQVWQAVGLPVSPYVALDRRQYSEMAANALLATFTHLGLPLIVKPSREGSSVGMSKVNTLSELPAALEEAFRHDDDILVEKWLSGPEYTVAILGDEVLPSIRIQPAGTFYDYEAKYLSDDTQYFCPSGLSDEKEQELAGLAMAAYRAVGCSGWGRVDFMLDSDGAFYLLEVNTSPGMTSHSLVPMAAHQRGLTFSQLVVKILELAG</sequence>
<name>DDL_PECCP</name>
<reference key="1">
    <citation type="submission" date="2009-07" db="EMBL/GenBank/DDBJ databases">
        <title>Complete sequence of Pectobacterium carotovorum subsp. carotovorum PC1.</title>
        <authorList>
            <consortium name="US DOE Joint Genome Institute"/>
            <person name="Lucas S."/>
            <person name="Copeland A."/>
            <person name="Lapidus A."/>
            <person name="Glavina del Rio T."/>
            <person name="Tice H."/>
            <person name="Bruce D."/>
            <person name="Goodwin L."/>
            <person name="Pitluck S."/>
            <person name="Munk A.C."/>
            <person name="Brettin T."/>
            <person name="Detter J.C."/>
            <person name="Han C."/>
            <person name="Tapia R."/>
            <person name="Larimer F."/>
            <person name="Land M."/>
            <person name="Hauser L."/>
            <person name="Kyrpides N."/>
            <person name="Mikhailova N."/>
            <person name="Balakrishnan V."/>
            <person name="Glasner J."/>
            <person name="Perna N.T."/>
        </authorList>
    </citation>
    <scope>NUCLEOTIDE SEQUENCE [LARGE SCALE GENOMIC DNA]</scope>
    <source>
        <strain>PC1</strain>
    </source>
</reference>
<accession>C6DEU1</accession>
<evidence type="ECO:0000250" key="1"/>
<evidence type="ECO:0000255" key="2">
    <source>
        <dbReference type="HAMAP-Rule" id="MF_00047"/>
    </source>
</evidence>
<protein>
    <recommendedName>
        <fullName evidence="2">D-alanine--D-alanine ligase</fullName>
        <ecNumber evidence="2">6.3.2.4</ecNumber>
    </recommendedName>
    <alternativeName>
        <fullName evidence="2">D-Ala-D-Ala ligase</fullName>
    </alternativeName>
    <alternativeName>
        <fullName evidence="2">D-alanylalanine synthetase</fullName>
    </alternativeName>
</protein>
<keyword id="KW-0067">ATP-binding</keyword>
<keyword id="KW-0133">Cell shape</keyword>
<keyword id="KW-0961">Cell wall biogenesis/degradation</keyword>
<keyword id="KW-0963">Cytoplasm</keyword>
<keyword id="KW-0436">Ligase</keyword>
<keyword id="KW-0460">Magnesium</keyword>
<keyword id="KW-0464">Manganese</keyword>
<keyword id="KW-0479">Metal-binding</keyword>
<keyword id="KW-0547">Nucleotide-binding</keyword>
<keyword id="KW-0573">Peptidoglycan synthesis</keyword>